<reference key="1">
    <citation type="journal article" date="2007" name="PLoS Genet.">
        <title>Patterns and implications of gene gain and loss in the evolution of Prochlorococcus.</title>
        <authorList>
            <person name="Kettler G.C."/>
            <person name="Martiny A.C."/>
            <person name="Huang K."/>
            <person name="Zucker J."/>
            <person name="Coleman M.L."/>
            <person name="Rodrigue S."/>
            <person name="Chen F."/>
            <person name="Lapidus A."/>
            <person name="Ferriera S."/>
            <person name="Johnson J."/>
            <person name="Steglich C."/>
            <person name="Church G.M."/>
            <person name="Richardson P."/>
            <person name="Chisholm S.W."/>
        </authorList>
    </citation>
    <scope>NUCLEOTIDE SEQUENCE [LARGE SCALE GENOMIC DNA]</scope>
    <source>
        <strain>NATL1A</strain>
    </source>
</reference>
<gene>
    <name evidence="1" type="primary">ndhM</name>
    <name type="ordered locus">NATL1_02171</name>
</gene>
<feature type="chain" id="PRO_0000352194" description="NAD(P)H-quinone oxidoreductase subunit M">
    <location>
        <begin position="1"/>
        <end position="115"/>
    </location>
</feature>
<dbReference type="EC" id="7.1.1.-" evidence="1"/>
<dbReference type="EMBL" id="CP000553">
    <property type="protein sequence ID" value="ABM74781.1"/>
    <property type="molecule type" value="Genomic_DNA"/>
</dbReference>
<dbReference type="RefSeq" id="WP_011823005.1">
    <property type="nucleotide sequence ID" value="NC_008819.1"/>
</dbReference>
<dbReference type="SMR" id="A2BZX1"/>
<dbReference type="KEGG" id="pme:NATL1_02171"/>
<dbReference type="eggNOG" id="ENOG5031AQM">
    <property type="taxonomic scope" value="Bacteria"/>
</dbReference>
<dbReference type="HOGENOM" id="CLU_137431_0_0_3"/>
<dbReference type="Proteomes" id="UP000002592">
    <property type="component" value="Chromosome"/>
</dbReference>
<dbReference type="GO" id="GO:0031676">
    <property type="term" value="C:plasma membrane-derived thylakoid membrane"/>
    <property type="evidence" value="ECO:0007669"/>
    <property type="project" value="UniProtKB-SubCell"/>
</dbReference>
<dbReference type="GO" id="GO:0016655">
    <property type="term" value="F:oxidoreductase activity, acting on NAD(P)H, quinone or similar compound as acceptor"/>
    <property type="evidence" value="ECO:0007669"/>
    <property type="project" value="UniProtKB-UniRule"/>
</dbReference>
<dbReference type="GO" id="GO:0048038">
    <property type="term" value="F:quinone binding"/>
    <property type="evidence" value="ECO:0007669"/>
    <property type="project" value="UniProtKB-KW"/>
</dbReference>
<dbReference type="HAMAP" id="MF_01352">
    <property type="entry name" value="NDH1_NDH1M"/>
    <property type="match status" value="1"/>
</dbReference>
<dbReference type="InterPro" id="IPR018922">
    <property type="entry name" value="NdhM"/>
</dbReference>
<dbReference type="PANTHER" id="PTHR36900">
    <property type="entry name" value="NAD(P)H-QUINONE OXIDOREDUCTASE SUBUNIT M, CHLOROPLASTIC"/>
    <property type="match status" value="1"/>
</dbReference>
<dbReference type="PANTHER" id="PTHR36900:SF1">
    <property type="entry name" value="NAD(P)H-QUINONE OXIDOREDUCTASE SUBUNIT M, CHLOROPLASTIC"/>
    <property type="match status" value="1"/>
</dbReference>
<dbReference type="Pfam" id="PF10664">
    <property type="entry name" value="NdhM"/>
    <property type="match status" value="1"/>
</dbReference>
<accession>A2BZX1</accession>
<protein>
    <recommendedName>
        <fullName evidence="1">NAD(P)H-quinone oxidoreductase subunit M</fullName>
        <ecNumber evidence="1">7.1.1.-</ecNumber>
    </recommendedName>
    <alternativeName>
        <fullName evidence="1">NAD(P)H dehydrogenase I subunit M</fullName>
        <shortName evidence="1">NDH-1 subunit M</shortName>
        <shortName evidence="1">NDH-M</shortName>
    </alternativeName>
</protein>
<organism>
    <name type="scientific">Prochlorococcus marinus (strain NATL1A)</name>
    <dbReference type="NCBI Taxonomy" id="167555"/>
    <lineage>
        <taxon>Bacteria</taxon>
        <taxon>Bacillati</taxon>
        <taxon>Cyanobacteriota</taxon>
        <taxon>Cyanophyceae</taxon>
        <taxon>Synechococcales</taxon>
        <taxon>Prochlorococcaceae</taxon>
        <taxon>Prochlorococcus</taxon>
    </lineage>
</organism>
<name>NDHM_PROM1</name>
<evidence type="ECO:0000255" key="1">
    <source>
        <dbReference type="HAMAP-Rule" id="MF_01352"/>
    </source>
</evidence>
<proteinExistence type="inferred from homology"/>
<keyword id="KW-0472">Membrane</keyword>
<keyword id="KW-0520">NAD</keyword>
<keyword id="KW-0521">NADP</keyword>
<keyword id="KW-0618">Plastoquinone</keyword>
<keyword id="KW-0874">Quinone</keyword>
<keyword id="KW-0793">Thylakoid</keyword>
<keyword id="KW-1278">Translocase</keyword>
<keyword id="KW-0813">Transport</keyword>
<sequence>MSDTILKCTTRHVRIFTAVVENNDLILDNGHLTLDIDPDNEFSWSDQSIKKVQDYFRELVELQADNELSDYTLRKIGSLLEDFIRKLLKDGELSYNPNSRVMNYSMGLPRTQELL</sequence>
<comment type="function">
    <text evidence="1">NDH-1 shuttles electrons from an unknown electron donor, via FMN and iron-sulfur (Fe-S) centers, to quinones in the respiratory and/or the photosynthetic chain. The immediate electron acceptor for the enzyme in this species is believed to be plastoquinone. Couples the redox reaction to proton translocation, and thus conserves the redox energy in a proton gradient. Cyanobacterial NDH-1 also plays a role in inorganic carbon-concentration.</text>
</comment>
<comment type="catalytic activity">
    <reaction evidence="1">
        <text>a plastoquinone + NADH + (n+1) H(+)(in) = a plastoquinol + NAD(+) + n H(+)(out)</text>
        <dbReference type="Rhea" id="RHEA:42608"/>
        <dbReference type="Rhea" id="RHEA-COMP:9561"/>
        <dbReference type="Rhea" id="RHEA-COMP:9562"/>
        <dbReference type="ChEBI" id="CHEBI:15378"/>
        <dbReference type="ChEBI" id="CHEBI:17757"/>
        <dbReference type="ChEBI" id="CHEBI:57540"/>
        <dbReference type="ChEBI" id="CHEBI:57945"/>
        <dbReference type="ChEBI" id="CHEBI:62192"/>
    </reaction>
</comment>
<comment type="catalytic activity">
    <reaction evidence="1">
        <text>a plastoquinone + NADPH + (n+1) H(+)(in) = a plastoquinol + NADP(+) + n H(+)(out)</text>
        <dbReference type="Rhea" id="RHEA:42612"/>
        <dbReference type="Rhea" id="RHEA-COMP:9561"/>
        <dbReference type="Rhea" id="RHEA-COMP:9562"/>
        <dbReference type="ChEBI" id="CHEBI:15378"/>
        <dbReference type="ChEBI" id="CHEBI:17757"/>
        <dbReference type="ChEBI" id="CHEBI:57783"/>
        <dbReference type="ChEBI" id="CHEBI:58349"/>
        <dbReference type="ChEBI" id="CHEBI:62192"/>
    </reaction>
</comment>
<comment type="subunit">
    <text evidence="1">NDH-1 can be composed of about 15 different subunits; different subcomplexes with different compositions have been identified which probably have different functions.</text>
</comment>
<comment type="subcellular location">
    <subcellularLocation>
        <location evidence="1">Cellular thylakoid membrane</location>
        <topology evidence="1">Peripheral membrane protein</topology>
        <orientation evidence="1">Cytoplasmic side</orientation>
    </subcellularLocation>
</comment>
<comment type="similarity">
    <text evidence="1">Belongs to the complex I NdhM subunit family.</text>
</comment>